<organism>
    <name type="scientific">Treponema pallidum (strain Nichols)</name>
    <dbReference type="NCBI Taxonomy" id="243276"/>
    <lineage>
        <taxon>Bacteria</taxon>
        <taxon>Pseudomonadati</taxon>
        <taxon>Spirochaetota</taxon>
        <taxon>Spirochaetia</taxon>
        <taxon>Spirochaetales</taxon>
        <taxon>Treponemataceae</taxon>
        <taxon>Treponema</taxon>
    </lineage>
</organism>
<protein>
    <recommendedName>
        <fullName>Uncharacterized protein TP_0138</fullName>
    </recommendedName>
</protein>
<proteinExistence type="predicted"/>
<gene>
    <name type="ordered locus">TP_0138</name>
</gene>
<name>Y138_TREPA</name>
<keyword id="KW-1003">Cell membrane</keyword>
<keyword id="KW-0472">Membrane</keyword>
<keyword id="KW-1185">Reference proteome</keyword>
<keyword id="KW-0812">Transmembrane</keyword>
<keyword id="KW-1133">Transmembrane helix</keyword>
<reference key="1">
    <citation type="journal article" date="1998" name="Science">
        <title>Complete genome sequence of Treponema pallidum, the syphilis spirochete.</title>
        <authorList>
            <person name="Fraser C.M."/>
            <person name="Norris S.J."/>
            <person name="Weinstock G.M."/>
            <person name="White O."/>
            <person name="Sutton G.G."/>
            <person name="Dodson R.J."/>
            <person name="Gwinn M.L."/>
            <person name="Hickey E.K."/>
            <person name="Clayton R.A."/>
            <person name="Ketchum K.A."/>
            <person name="Sodergren E."/>
            <person name="Hardham J.M."/>
            <person name="McLeod M.P."/>
            <person name="Salzberg S.L."/>
            <person name="Peterson J.D."/>
            <person name="Khalak H.G."/>
            <person name="Richardson D.L."/>
            <person name="Howell J.K."/>
            <person name="Chidambaram M."/>
            <person name="Utterback T.R."/>
            <person name="McDonald L.A."/>
            <person name="Artiach P."/>
            <person name="Bowman C."/>
            <person name="Cotton M.D."/>
            <person name="Fujii C."/>
            <person name="Garland S.A."/>
            <person name="Hatch B."/>
            <person name="Horst K."/>
            <person name="Roberts K.M."/>
            <person name="Sandusky M."/>
            <person name="Weidman J.F."/>
            <person name="Smith H.O."/>
            <person name="Venter J.C."/>
        </authorList>
    </citation>
    <scope>NUCLEOTIDE SEQUENCE [LARGE SCALE GENOMIC DNA]</scope>
    <source>
        <strain>Nichols</strain>
    </source>
</reference>
<sequence length="245" mass="26965">MQPPRPACQDEGTHGKEVCMLLIQKKRLLVVLIVSFLSILFSAGYAFRIGMLHAHKGSAETILFYGFVAAAFHFILSLYLMLHAHHKKKELLKLADMLRYGGSIGESHFKKFGVLGTQIQFLLKELLALSAQKSLKIAALSGLQRALTELIPTPVIIIDLNGTILDMTKGARKRVQRADKTLTIEHIFPATDSTRAVQEAEKTHTPVEQEGGIVFIPVFSAVGNISHFLVDISKQPASDEPLSLA</sequence>
<accession>O83174</accession>
<feature type="chain" id="PRO_0000202199" description="Uncharacterized protein TP_0138">
    <location>
        <begin position="1"/>
        <end position="245"/>
    </location>
</feature>
<feature type="transmembrane region" description="Helical" evidence="1">
    <location>
        <begin position="29"/>
        <end position="51"/>
    </location>
</feature>
<feature type="transmembrane region" description="Helical" evidence="1">
    <location>
        <begin position="61"/>
        <end position="83"/>
    </location>
</feature>
<evidence type="ECO:0000255" key="1"/>
<evidence type="ECO:0000305" key="2"/>
<comment type="subcellular location">
    <subcellularLocation>
        <location evidence="2">Cell membrane</location>
        <topology evidence="2">Multi-pass membrane protein</topology>
    </subcellularLocation>
</comment>
<dbReference type="EMBL" id="AE000520">
    <property type="protein sequence ID" value="AAC65139.1"/>
    <property type="molecule type" value="Genomic_DNA"/>
</dbReference>
<dbReference type="PIR" id="D71360">
    <property type="entry name" value="D71360"/>
</dbReference>
<dbReference type="RefSeq" id="WP_010881586.1">
    <property type="nucleotide sequence ID" value="NC_021490.2"/>
</dbReference>
<dbReference type="SMR" id="O83174"/>
<dbReference type="STRING" id="243276.TP_0138"/>
<dbReference type="EnsemblBacteria" id="AAC65139">
    <property type="protein sequence ID" value="AAC65139"/>
    <property type="gene ID" value="TP_0138"/>
</dbReference>
<dbReference type="KEGG" id="tpa:TP_0138"/>
<dbReference type="KEGG" id="tpw:TPANIC_0138"/>
<dbReference type="eggNOG" id="ENOG5031CP2">
    <property type="taxonomic scope" value="Bacteria"/>
</dbReference>
<dbReference type="HOGENOM" id="CLU_1093904_0_0_12"/>
<dbReference type="Proteomes" id="UP000000811">
    <property type="component" value="Chromosome"/>
</dbReference>
<dbReference type="GO" id="GO:0005886">
    <property type="term" value="C:plasma membrane"/>
    <property type="evidence" value="ECO:0007669"/>
    <property type="project" value="UniProtKB-SubCell"/>
</dbReference>